<name>SECA_PROMS</name>
<proteinExistence type="inferred from homology"/>
<accession>A2BTM1</accession>
<feature type="chain" id="PRO_0000318404" description="Protein translocase subunit SecA">
    <location>
        <begin position="1"/>
        <end position="943"/>
    </location>
</feature>
<feature type="region of interest" description="Disordered" evidence="2">
    <location>
        <begin position="535"/>
        <end position="562"/>
    </location>
</feature>
<feature type="binding site" evidence="1">
    <location>
        <position position="90"/>
    </location>
    <ligand>
        <name>ATP</name>
        <dbReference type="ChEBI" id="CHEBI:30616"/>
    </ligand>
</feature>
<feature type="binding site" evidence="1">
    <location>
        <begin position="108"/>
        <end position="112"/>
    </location>
    <ligand>
        <name>ATP</name>
        <dbReference type="ChEBI" id="CHEBI:30616"/>
    </ligand>
</feature>
<feature type="binding site" evidence="1">
    <location>
        <position position="509"/>
    </location>
    <ligand>
        <name>ATP</name>
        <dbReference type="ChEBI" id="CHEBI:30616"/>
    </ligand>
</feature>
<keyword id="KW-0067">ATP-binding</keyword>
<keyword id="KW-0997">Cell inner membrane</keyword>
<keyword id="KW-1003">Cell membrane</keyword>
<keyword id="KW-0963">Cytoplasm</keyword>
<keyword id="KW-0472">Membrane</keyword>
<keyword id="KW-0547">Nucleotide-binding</keyword>
<keyword id="KW-0653">Protein transport</keyword>
<keyword id="KW-0793">Thylakoid</keyword>
<keyword id="KW-1278">Translocase</keyword>
<keyword id="KW-0811">Translocation</keyword>
<keyword id="KW-0813">Transport</keyword>
<protein>
    <recommendedName>
        <fullName evidence="1">Protein translocase subunit SecA</fullName>
        <ecNumber evidence="1">7.4.2.8</ecNumber>
    </recommendedName>
</protein>
<reference key="1">
    <citation type="journal article" date="2007" name="PLoS Genet.">
        <title>Patterns and implications of gene gain and loss in the evolution of Prochlorococcus.</title>
        <authorList>
            <person name="Kettler G.C."/>
            <person name="Martiny A.C."/>
            <person name="Huang K."/>
            <person name="Zucker J."/>
            <person name="Coleman M.L."/>
            <person name="Rodrigue S."/>
            <person name="Chen F."/>
            <person name="Lapidus A."/>
            <person name="Ferriera S."/>
            <person name="Johnson J."/>
            <person name="Steglich C."/>
            <person name="Church G.M."/>
            <person name="Richardson P."/>
            <person name="Chisholm S.W."/>
        </authorList>
    </citation>
    <scope>NUCLEOTIDE SEQUENCE [LARGE SCALE GENOMIC DNA]</scope>
    <source>
        <strain>AS9601</strain>
    </source>
</reference>
<evidence type="ECO:0000255" key="1">
    <source>
        <dbReference type="HAMAP-Rule" id="MF_01382"/>
    </source>
</evidence>
<evidence type="ECO:0000256" key="2">
    <source>
        <dbReference type="SAM" id="MobiDB-lite"/>
    </source>
</evidence>
<sequence length="943" mass="108173">MLKLLLGDPNTRKLKRYQPIVEEINFLEEEISQLTDDELRKETQNLKSNISAELDFKKQKELLEEFLPKAFAIVREASKRVLDMRHFDVQLIGGMVLNECQIAEMKTGEGKTLVATLPCYLNALTGKGVHVVTVNDYLARRDAEWMGQVHRFLGLSVGLIQQDMNPVERKKNYDCDITYATNSELGFDYLRDNMATDISEVVQRKFNYCVIDEVDSILIDEARTPLIISGQVERPQEKYQKAAELSLALIKAKELSKDGIDPEGDYEVDEKQRSCILTDQGFAKCEEYLGVNDLYNPQDPWAHYITNALKAKELFIKDVNYIIKNEEAVIVDEFTGRVMPGRRWSDGQHQAIEAKESLKIQPETQTLASITYQNFFLLYPGLAGMTGTAKTEEVEFEKTYKLESTVIPTNQIRKRQDWSDQVFKTEIGKWKAVAKETAKIHRDGRPVLVGTTSVEKSELLSSLLSAEKIPHNLLNAKPENVEREAEIVAQAGRAGAVTIATNMAGRGTDIILGGNSDYMARLKLKEILIPLLVKPDNEHKPPIPKQRNSKSKGGFSRKAGSNLKKKISNSSTNLFPCKLDEVIEKKLSLLSDELVKNWGDKQLSVLELDDRIATAAEKAPTDDKLIRLLRESLSDVKNEYEKVLIHEEEKVREAGGLHVIGTERHESRRVDNQLRGRAGRQGDLGSTRFFLSLDDNLLRIFGGDRVANLMNAFRVDEDMPIESGMLTRSLESAQKKVETYYYDIRKQVFEYDEVMNNQRKAVYGERLRVLKGIDLKRQVIGYGERTMIEIVDAYINPDLPPEEWNIEQLISKVKEFIYLLDDLKVEDINLLSIEELKNYLQEQLRIAYDLKESQIDKIRPGLMREAERFFILQQIDNLWREHLQSMDSLRESVGLRGYGQKDPLIEYKNEGYDMFLEMMTNMRRNVIYSMFMFQPKTDKNDKN</sequence>
<comment type="function">
    <text evidence="1">Part of the Sec protein translocase complex. Interacts with the SecYEG preprotein conducting channel. Has a central role in coupling the hydrolysis of ATP to the transfer of proteins into and across the cell membrane, serving as an ATP-driven molecular motor driving the stepwise translocation of polypeptide chains across the membrane.</text>
</comment>
<comment type="function">
    <text evidence="1">Probably participates in protein translocation into and across both the cytoplasmic and thylakoid membranes in cyanobacterial cells.</text>
</comment>
<comment type="catalytic activity">
    <reaction evidence="1">
        <text>ATP + H2O + cellular proteinSide 1 = ADP + phosphate + cellular proteinSide 2.</text>
        <dbReference type="EC" id="7.4.2.8"/>
    </reaction>
</comment>
<comment type="subunit">
    <text evidence="1">Monomer and homodimer. Part of the essential Sec protein translocation apparatus which comprises SecA, SecYEG and auxiliary proteins SecDF. Other proteins may also be involved.</text>
</comment>
<comment type="subcellular location">
    <subcellularLocation>
        <location evidence="1">Cell inner membrane</location>
        <topology evidence="1">Peripheral membrane protein</topology>
        <orientation evidence="1">Cytoplasmic side</orientation>
    </subcellularLocation>
    <subcellularLocation>
        <location evidence="1">Cellular thylakoid membrane</location>
        <topology evidence="1">Peripheral membrane protein</topology>
        <orientation evidence="1">Cytoplasmic side</orientation>
    </subcellularLocation>
    <subcellularLocation>
        <location evidence="1">Cytoplasm</location>
    </subcellularLocation>
</comment>
<comment type="similarity">
    <text evidence="1">Belongs to the SecA family.</text>
</comment>
<gene>
    <name evidence="1" type="primary">secA</name>
    <name type="ordered locus">A9601_18491</name>
</gene>
<dbReference type="EC" id="7.4.2.8" evidence="1"/>
<dbReference type="EMBL" id="CP000551">
    <property type="protein sequence ID" value="ABM71132.1"/>
    <property type="molecule type" value="Genomic_DNA"/>
</dbReference>
<dbReference type="RefSeq" id="WP_011819251.1">
    <property type="nucleotide sequence ID" value="NC_008816.1"/>
</dbReference>
<dbReference type="SMR" id="A2BTM1"/>
<dbReference type="STRING" id="146891.A9601_18491"/>
<dbReference type="KEGG" id="pmb:A9601_18491"/>
<dbReference type="eggNOG" id="COG0653">
    <property type="taxonomic scope" value="Bacteria"/>
</dbReference>
<dbReference type="HOGENOM" id="CLU_005314_3_0_3"/>
<dbReference type="Proteomes" id="UP000002590">
    <property type="component" value="Chromosome"/>
</dbReference>
<dbReference type="GO" id="GO:0031522">
    <property type="term" value="C:cell envelope Sec protein transport complex"/>
    <property type="evidence" value="ECO:0007669"/>
    <property type="project" value="TreeGrafter"/>
</dbReference>
<dbReference type="GO" id="GO:0005829">
    <property type="term" value="C:cytosol"/>
    <property type="evidence" value="ECO:0007669"/>
    <property type="project" value="TreeGrafter"/>
</dbReference>
<dbReference type="GO" id="GO:0031676">
    <property type="term" value="C:plasma membrane-derived thylakoid membrane"/>
    <property type="evidence" value="ECO:0007669"/>
    <property type="project" value="UniProtKB-SubCell"/>
</dbReference>
<dbReference type="GO" id="GO:0005524">
    <property type="term" value="F:ATP binding"/>
    <property type="evidence" value="ECO:0007669"/>
    <property type="project" value="UniProtKB-UniRule"/>
</dbReference>
<dbReference type="GO" id="GO:0008564">
    <property type="term" value="F:protein-exporting ATPase activity"/>
    <property type="evidence" value="ECO:0007669"/>
    <property type="project" value="UniProtKB-EC"/>
</dbReference>
<dbReference type="GO" id="GO:0065002">
    <property type="term" value="P:intracellular protein transmembrane transport"/>
    <property type="evidence" value="ECO:0007669"/>
    <property type="project" value="UniProtKB-UniRule"/>
</dbReference>
<dbReference type="GO" id="GO:0017038">
    <property type="term" value="P:protein import"/>
    <property type="evidence" value="ECO:0007669"/>
    <property type="project" value="InterPro"/>
</dbReference>
<dbReference type="GO" id="GO:0006605">
    <property type="term" value="P:protein targeting"/>
    <property type="evidence" value="ECO:0007669"/>
    <property type="project" value="UniProtKB-UniRule"/>
</dbReference>
<dbReference type="GO" id="GO:0043952">
    <property type="term" value="P:protein transport by the Sec complex"/>
    <property type="evidence" value="ECO:0007669"/>
    <property type="project" value="TreeGrafter"/>
</dbReference>
<dbReference type="CDD" id="cd17928">
    <property type="entry name" value="DEXDc_SecA"/>
    <property type="match status" value="1"/>
</dbReference>
<dbReference type="CDD" id="cd18803">
    <property type="entry name" value="SF2_C_secA"/>
    <property type="match status" value="1"/>
</dbReference>
<dbReference type="FunFam" id="3.90.1440.10:FF:000003">
    <property type="entry name" value="Preprotein translocase SecA subunit"/>
    <property type="match status" value="1"/>
</dbReference>
<dbReference type="FunFam" id="3.40.50.300:FF:000429">
    <property type="entry name" value="Preprotein translocase subunit SecA"/>
    <property type="match status" value="1"/>
</dbReference>
<dbReference type="FunFam" id="1.10.3060.10:FF:000003">
    <property type="entry name" value="Protein translocase subunit SecA"/>
    <property type="match status" value="1"/>
</dbReference>
<dbReference type="FunFam" id="3.40.50.300:FF:000334">
    <property type="entry name" value="Protein translocase subunit SecA"/>
    <property type="match status" value="1"/>
</dbReference>
<dbReference type="Gene3D" id="1.10.3060.10">
    <property type="entry name" value="Helical scaffold and wing domains of SecA"/>
    <property type="match status" value="1"/>
</dbReference>
<dbReference type="Gene3D" id="3.40.50.300">
    <property type="entry name" value="P-loop containing nucleotide triphosphate hydrolases"/>
    <property type="match status" value="2"/>
</dbReference>
<dbReference type="Gene3D" id="3.90.1440.10">
    <property type="entry name" value="SecA, preprotein cross-linking domain"/>
    <property type="match status" value="1"/>
</dbReference>
<dbReference type="HAMAP" id="MF_01382">
    <property type="entry name" value="SecA"/>
    <property type="match status" value="1"/>
</dbReference>
<dbReference type="InterPro" id="IPR014001">
    <property type="entry name" value="Helicase_ATP-bd"/>
</dbReference>
<dbReference type="InterPro" id="IPR027417">
    <property type="entry name" value="P-loop_NTPase"/>
</dbReference>
<dbReference type="InterPro" id="IPR000185">
    <property type="entry name" value="SecA"/>
</dbReference>
<dbReference type="InterPro" id="IPR020937">
    <property type="entry name" value="SecA_CS"/>
</dbReference>
<dbReference type="InterPro" id="IPR011115">
    <property type="entry name" value="SecA_DEAD"/>
</dbReference>
<dbReference type="InterPro" id="IPR014018">
    <property type="entry name" value="SecA_motor_DEAD"/>
</dbReference>
<dbReference type="InterPro" id="IPR011130">
    <property type="entry name" value="SecA_preprotein_X-link_dom"/>
</dbReference>
<dbReference type="InterPro" id="IPR044722">
    <property type="entry name" value="SecA_SF2_C"/>
</dbReference>
<dbReference type="InterPro" id="IPR011116">
    <property type="entry name" value="SecA_Wing/Scaffold"/>
</dbReference>
<dbReference type="InterPro" id="IPR036266">
    <property type="entry name" value="SecA_Wing/Scaffold_sf"/>
</dbReference>
<dbReference type="InterPro" id="IPR036670">
    <property type="entry name" value="SecA_X-link_sf"/>
</dbReference>
<dbReference type="NCBIfam" id="TIGR00963">
    <property type="entry name" value="secA"/>
    <property type="match status" value="1"/>
</dbReference>
<dbReference type="PANTHER" id="PTHR30612:SF0">
    <property type="entry name" value="CHLOROPLAST PROTEIN-TRANSPORTING ATPASE"/>
    <property type="match status" value="1"/>
</dbReference>
<dbReference type="PANTHER" id="PTHR30612">
    <property type="entry name" value="SECA INNER MEMBRANE COMPONENT OF SEC PROTEIN SECRETION SYSTEM"/>
    <property type="match status" value="1"/>
</dbReference>
<dbReference type="Pfam" id="PF21090">
    <property type="entry name" value="P-loop_SecA"/>
    <property type="match status" value="1"/>
</dbReference>
<dbReference type="Pfam" id="PF07517">
    <property type="entry name" value="SecA_DEAD"/>
    <property type="match status" value="1"/>
</dbReference>
<dbReference type="Pfam" id="PF01043">
    <property type="entry name" value="SecA_PP_bind"/>
    <property type="match status" value="1"/>
</dbReference>
<dbReference type="Pfam" id="PF07516">
    <property type="entry name" value="SecA_SW"/>
    <property type="match status" value="1"/>
</dbReference>
<dbReference type="PRINTS" id="PR00906">
    <property type="entry name" value="SECA"/>
</dbReference>
<dbReference type="SMART" id="SM00957">
    <property type="entry name" value="SecA_DEAD"/>
    <property type="match status" value="1"/>
</dbReference>
<dbReference type="SMART" id="SM00958">
    <property type="entry name" value="SecA_PP_bind"/>
    <property type="match status" value="1"/>
</dbReference>
<dbReference type="SUPFAM" id="SSF81886">
    <property type="entry name" value="Helical scaffold and wing domains of SecA"/>
    <property type="match status" value="1"/>
</dbReference>
<dbReference type="SUPFAM" id="SSF52540">
    <property type="entry name" value="P-loop containing nucleoside triphosphate hydrolases"/>
    <property type="match status" value="2"/>
</dbReference>
<dbReference type="SUPFAM" id="SSF81767">
    <property type="entry name" value="Pre-protein crosslinking domain of SecA"/>
    <property type="match status" value="1"/>
</dbReference>
<dbReference type="PROSITE" id="PS01312">
    <property type="entry name" value="SECA"/>
    <property type="match status" value="1"/>
</dbReference>
<dbReference type="PROSITE" id="PS51196">
    <property type="entry name" value="SECA_MOTOR_DEAD"/>
    <property type="match status" value="1"/>
</dbReference>
<organism>
    <name type="scientific">Prochlorococcus marinus (strain AS9601)</name>
    <dbReference type="NCBI Taxonomy" id="146891"/>
    <lineage>
        <taxon>Bacteria</taxon>
        <taxon>Bacillati</taxon>
        <taxon>Cyanobacteriota</taxon>
        <taxon>Cyanophyceae</taxon>
        <taxon>Synechococcales</taxon>
        <taxon>Prochlorococcaceae</taxon>
        <taxon>Prochlorococcus</taxon>
    </lineage>
</organism>